<accession>P82882</accession>
<name>TP1C_LITCL</name>
<organism>
    <name type="scientific">Lithobates clamitans</name>
    <name type="common">Green frog</name>
    <name type="synonym">Rana clamitans</name>
    <dbReference type="NCBI Taxonomy" id="145282"/>
    <lineage>
        <taxon>Eukaryota</taxon>
        <taxon>Metazoa</taxon>
        <taxon>Chordata</taxon>
        <taxon>Craniata</taxon>
        <taxon>Vertebrata</taxon>
        <taxon>Euteleostomi</taxon>
        <taxon>Amphibia</taxon>
        <taxon>Batrachia</taxon>
        <taxon>Anura</taxon>
        <taxon>Neobatrachia</taxon>
        <taxon>Ranoidea</taxon>
        <taxon>Ranidae</taxon>
        <taxon>Lithobates</taxon>
    </lineage>
</organism>
<keyword id="KW-0027">Amidation</keyword>
<keyword id="KW-0878">Amphibian defense peptide</keyword>
<keyword id="KW-0044">Antibiotic</keyword>
<keyword id="KW-0929">Antimicrobial</keyword>
<keyword id="KW-0903">Direct protein sequencing</keyword>
<keyword id="KW-0964">Secreted</keyword>
<comment type="function">
    <text evidence="1">Antibacterial activity against Gram-positive bacterium S.aureus.</text>
</comment>
<comment type="subcellular location">
    <subcellularLocation>
        <location evidence="2">Secreted</location>
    </subcellularLocation>
</comment>
<comment type="tissue specificity">
    <text evidence="5">Expressed by the skin glands.</text>
</comment>
<comment type="mass spectrometry" mass="1461.0" error="0.02" method="Electrospray" evidence="2"/>
<comment type="similarity">
    <text evidence="4">Belongs to the frog skin active peptide (FSAP) family. Temporin subfamily.</text>
</comment>
<evidence type="ECO:0000250" key="1">
    <source>
        <dbReference type="UniProtKB" id="P82881"/>
    </source>
</evidence>
<evidence type="ECO:0000269" key="2">
    <source>
    </source>
</evidence>
<evidence type="ECO:0000303" key="3">
    <source>
    </source>
</evidence>
<evidence type="ECO:0000305" key="4"/>
<evidence type="ECO:0000305" key="5">
    <source>
    </source>
</evidence>
<feature type="peptide" id="PRO_0000043572" description="Temporin-1Cc" evidence="2">
    <location>
        <begin position="1"/>
        <end position="13"/>
    </location>
</feature>
<feature type="modified residue" description="Leucine amide" evidence="2">
    <location>
        <position position="13"/>
    </location>
</feature>
<proteinExistence type="evidence at protein level"/>
<reference key="1">
    <citation type="journal article" date="2000" name="Peptides">
        <title>Purification and characterization of antimicrobial peptides from the skin of the North American green frog Rana clamitans.</title>
        <authorList>
            <person name="Halverson T."/>
            <person name="Basir Y.J."/>
            <person name="Knoop F.C."/>
            <person name="Conlon J.M."/>
        </authorList>
    </citation>
    <scope>PROTEIN SEQUENCE</scope>
    <scope>AMIDATION AT LEU-13</scope>
    <scope>MASS SPECTROMETRY</scope>
    <scope>SUBCELLULAR LOCATION</scope>
    <source>
        <tissue>Skin secretion</tissue>
    </source>
</reference>
<dbReference type="GO" id="GO:0005576">
    <property type="term" value="C:extracellular region"/>
    <property type="evidence" value="ECO:0007669"/>
    <property type="project" value="UniProtKB-SubCell"/>
</dbReference>
<dbReference type="GO" id="GO:0042742">
    <property type="term" value="P:defense response to bacterium"/>
    <property type="evidence" value="ECO:0007669"/>
    <property type="project" value="UniProtKB-KW"/>
</dbReference>
<protein>
    <recommendedName>
        <fullName evidence="3">Temporin-1Cc</fullName>
    </recommendedName>
</protein>
<sequence length="13" mass="1462">FLPFLASLLTKVL</sequence>